<name>SUCC_HYDS0</name>
<feature type="chain" id="PRO_1000129196" description="Succinate--CoA ligase [ADP-forming] subunit beta">
    <location>
        <begin position="1"/>
        <end position="382"/>
    </location>
</feature>
<feature type="domain" description="ATP-grasp" evidence="1">
    <location>
        <begin position="9"/>
        <end position="240"/>
    </location>
</feature>
<feature type="binding site" evidence="1">
    <location>
        <position position="46"/>
    </location>
    <ligand>
        <name>ATP</name>
        <dbReference type="ChEBI" id="CHEBI:30616"/>
    </ligand>
</feature>
<feature type="binding site" evidence="1">
    <location>
        <position position="98"/>
    </location>
    <ligand>
        <name>ATP</name>
        <dbReference type="ChEBI" id="CHEBI:30616"/>
    </ligand>
</feature>
<feature type="binding site" evidence="1">
    <location>
        <position position="101"/>
    </location>
    <ligand>
        <name>ATP</name>
        <dbReference type="ChEBI" id="CHEBI:30616"/>
    </ligand>
</feature>
<feature type="binding site" evidence="1">
    <location>
        <position position="106"/>
    </location>
    <ligand>
        <name>ATP</name>
        <dbReference type="ChEBI" id="CHEBI:30616"/>
    </ligand>
</feature>
<feature type="binding site" evidence="1">
    <location>
        <position position="195"/>
    </location>
    <ligand>
        <name>Mg(2+)</name>
        <dbReference type="ChEBI" id="CHEBI:18420"/>
    </ligand>
</feature>
<feature type="binding site" evidence="1">
    <location>
        <position position="209"/>
    </location>
    <ligand>
        <name>Mg(2+)</name>
        <dbReference type="ChEBI" id="CHEBI:18420"/>
    </ligand>
</feature>
<feature type="binding site" evidence="1">
    <location>
        <position position="260"/>
    </location>
    <ligand>
        <name>substrate</name>
        <note>ligand shared with subunit alpha</note>
    </ligand>
</feature>
<feature type="binding site" evidence="1">
    <location>
        <begin position="317"/>
        <end position="319"/>
    </location>
    <ligand>
        <name>substrate</name>
        <note>ligand shared with subunit alpha</note>
    </ligand>
</feature>
<keyword id="KW-0067">ATP-binding</keyword>
<keyword id="KW-0436">Ligase</keyword>
<keyword id="KW-0460">Magnesium</keyword>
<keyword id="KW-0479">Metal-binding</keyword>
<keyword id="KW-0547">Nucleotide-binding</keyword>
<keyword id="KW-0816">Tricarboxylic acid cycle</keyword>
<proteinExistence type="inferred from homology"/>
<accession>B4U901</accession>
<protein>
    <recommendedName>
        <fullName evidence="1">Succinate--CoA ligase [ADP-forming] subunit beta</fullName>
        <ecNumber evidence="1">6.2.1.5</ecNumber>
    </recommendedName>
    <alternativeName>
        <fullName evidence="1">Succinyl-CoA synthetase subunit beta</fullName>
        <shortName evidence="1">SCS-beta</shortName>
    </alternativeName>
</protein>
<organism>
    <name type="scientific">Hydrogenobaculum sp. (strain Y04AAS1)</name>
    <dbReference type="NCBI Taxonomy" id="380749"/>
    <lineage>
        <taxon>Bacteria</taxon>
        <taxon>Pseudomonadati</taxon>
        <taxon>Aquificota</taxon>
        <taxon>Aquificia</taxon>
        <taxon>Aquificales</taxon>
        <taxon>Aquificaceae</taxon>
        <taxon>Hydrogenobaculum</taxon>
    </lineage>
</organism>
<comment type="function">
    <text evidence="1">Succinyl-CoA synthetase functions in the citric acid cycle (TCA), coupling the hydrolysis of succinyl-CoA to the synthesis of either ATP or GTP and thus represents the only step of substrate-level phosphorylation in the TCA. The beta subunit provides nucleotide specificity of the enzyme and binds the substrate succinate, while the binding sites for coenzyme A and phosphate are found in the alpha subunit.</text>
</comment>
<comment type="catalytic activity">
    <reaction evidence="1">
        <text>succinate + ATP + CoA = succinyl-CoA + ADP + phosphate</text>
        <dbReference type="Rhea" id="RHEA:17661"/>
        <dbReference type="ChEBI" id="CHEBI:30031"/>
        <dbReference type="ChEBI" id="CHEBI:30616"/>
        <dbReference type="ChEBI" id="CHEBI:43474"/>
        <dbReference type="ChEBI" id="CHEBI:57287"/>
        <dbReference type="ChEBI" id="CHEBI:57292"/>
        <dbReference type="ChEBI" id="CHEBI:456216"/>
        <dbReference type="EC" id="6.2.1.5"/>
    </reaction>
    <physiologicalReaction direction="right-to-left" evidence="1">
        <dbReference type="Rhea" id="RHEA:17663"/>
    </physiologicalReaction>
</comment>
<comment type="catalytic activity">
    <reaction evidence="1">
        <text>GTP + succinate + CoA = succinyl-CoA + GDP + phosphate</text>
        <dbReference type="Rhea" id="RHEA:22120"/>
        <dbReference type="ChEBI" id="CHEBI:30031"/>
        <dbReference type="ChEBI" id="CHEBI:37565"/>
        <dbReference type="ChEBI" id="CHEBI:43474"/>
        <dbReference type="ChEBI" id="CHEBI:57287"/>
        <dbReference type="ChEBI" id="CHEBI:57292"/>
        <dbReference type="ChEBI" id="CHEBI:58189"/>
    </reaction>
    <physiologicalReaction direction="right-to-left" evidence="1">
        <dbReference type="Rhea" id="RHEA:22122"/>
    </physiologicalReaction>
</comment>
<comment type="cofactor">
    <cofactor evidence="1">
        <name>Mg(2+)</name>
        <dbReference type="ChEBI" id="CHEBI:18420"/>
    </cofactor>
    <text evidence="1">Binds 1 Mg(2+) ion per subunit.</text>
</comment>
<comment type="pathway">
    <text evidence="1">Carbohydrate metabolism; tricarboxylic acid cycle; succinate from succinyl-CoA (ligase route): step 1/1.</text>
</comment>
<comment type="subunit">
    <text evidence="1">Heterotetramer of two alpha and two beta subunits.</text>
</comment>
<comment type="similarity">
    <text evidence="1">Belongs to the succinate/malate CoA ligase beta subunit family.</text>
</comment>
<evidence type="ECO:0000255" key="1">
    <source>
        <dbReference type="HAMAP-Rule" id="MF_00558"/>
    </source>
</evidence>
<dbReference type="EC" id="6.2.1.5" evidence="1"/>
<dbReference type="EMBL" id="CP001130">
    <property type="protein sequence ID" value="ACG57612.1"/>
    <property type="molecule type" value="Genomic_DNA"/>
</dbReference>
<dbReference type="RefSeq" id="WP_012513968.1">
    <property type="nucleotide sequence ID" value="NC_011126.1"/>
</dbReference>
<dbReference type="SMR" id="B4U901"/>
<dbReference type="STRING" id="380749.HY04AAS1_0925"/>
<dbReference type="KEGG" id="hya:HY04AAS1_0925"/>
<dbReference type="eggNOG" id="COG0045">
    <property type="taxonomic scope" value="Bacteria"/>
</dbReference>
<dbReference type="HOGENOM" id="CLU_037430_0_2_0"/>
<dbReference type="OrthoDB" id="9802602at2"/>
<dbReference type="UniPathway" id="UPA00223">
    <property type="reaction ID" value="UER00999"/>
</dbReference>
<dbReference type="GO" id="GO:0005829">
    <property type="term" value="C:cytosol"/>
    <property type="evidence" value="ECO:0007669"/>
    <property type="project" value="TreeGrafter"/>
</dbReference>
<dbReference type="GO" id="GO:0042709">
    <property type="term" value="C:succinate-CoA ligase complex"/>
    <property type="evidence" value="ECO:0007669"/>
    <property type="project" value="TreeGrafter"/>
</dbReference>
<dbReference type="GO" id="GO:0005524">
    <property type="term" value="F:ATP binding"/>
    <property type="evidence" value="ECO:0007669"/>
    <property type="project" value="UniProtKB-UniRule"/>
</dbReference>
<dbReference type="GO" id="GO:0000287">
    <property type="term" value="F:magnesium ion binding"/>
    <property type="evidence" value="ECO:0007669"/>
    <property type="project" value="UniProtKB-UniRule"/>
</dbReference>
<dbReference type="GO" id="GO:0004775">
    <property type="term" value="F:succinate-CoA ligase (ADP-forming) activity"/>
    <property type="evidence" value="ECO:0007669"/>
    <property type="project" value="UniProtKB-UniRule"/>
</dbReference>
<dbReference type="GO" id="GO:0004776">
    <property type="term" value="F:succinate-CoA ligase (GDP-forming) activity"/>
    <property type="evidence" value="ECO:0007669"/>
    <property type="project" value="RHEA"/>
</dbReference>
<dbReference type="GO" id="GO:0006104">
    <property type="term" value="P:succinyl-CoA metabolic process"/>
    <property type="evidence" value="ECO:0007669"/>
    <property type="project" value="TreeGrafter"/>
</dbReference>
<dbReference type="GO" id="GO:0006099">
    <property type="term" value="P:tricarboxylic acid cycle"/>
    <property type="evidence" value="ECO:0007669"/>
    <property type="project" value="UniProtKB-UniRule"/>
</dbReference>
<dbReference type="FunFam" id="3.30.1490.20:FF:000002">
    <property type="entry name" value="Succinate--CoA ligase [ADP-forming] subunit beta"/>
    <property type="match status" value="1"/>
</dbReference>
<dbReference type="FunFam" id="3.30.470.20:FF:000002">
    <property type="entry name" value="Succinate--CoA ligase [ADP-forming] subunit beta"/>
    <property type="match status" value="1"/>
</dbReference>
<dbReference type="FunFam" id="3.40.50.261:FF:000001">
    <property type="entry name" value="Succinate--CoA ligase [ADP-forming] subunit beta"/>
    <property type="match status" value="1"/>
</dbReference>
<dbReference type="Gene3D" id="3.30.1490.20">
    <property type="entry name" value="ATP-grasp fold, A domain"/>
    <property type="match status" value="1"/>
</dbReference>
<dbReference type="Gene3D" id="3.30.470.20">
    <property type="entry name" value="ATP-grasp fold, B domain"/>
    <property type="match status" value="1"/>
</dbReference>
<dbReference type="Gene3D" id="3.40.50.261">
    <property type="entry name" value="Succinyl-CoA synthetase domains"/>
    <property type="match status" value="1"/>
</dbReference>
<dbReference type="HAMAP" id="MF_00558">
    <property type="entry name" value="Succ_CoA_beta"/>
    <property type="match status" value="1"/>
</dbReference>
<dbReference type="InterPro" id="IPR011761">
    <property type="entry name" value="ATP-grasp"/>
</dbReference>
<dbReference type="InterPro" id="IPR013650">
    <property type="entry name" value="ATP-grasp_succ-CoA_synth-type"/>
</dbReference>
<dbReference type="InterPro" id="IPR013815">
    <property type="entry name" value="ATP_grasp_subdomain_1"/>
</dbReference>
<dbReference type="InterPro" id="IPR017866">
    <property type="entry name" value="Succ-CoA_synthase_bsu_CS"/>
</dbReference>
<dbReference type="InterPro" id="IPR005811">
    <property type="entry name" value="SUCC_ACL_C"/>
</dbReference>
<dbReference type="InterPro" id="IPR005809">
    <property type="entry name" value="Succ_CoA_ligase-like_bsu"/>
</dbReference>
<dbReference type="InterPro" id="IPR016102">
    <property type="entry name" value="Succinyl-CoA_synth-like"/>
</dbReference>
<dbReference type="NCBIfam" id="NF001913">
    <property type="entry name" value="PRK00696.1"/>
    <property type="match status" value="1"/>
</dbReference>
<dbReference type="NCBIfam" id="TIGR01016">
    <property type="entry name" value="sucCoAbeta"/>
    <property type="match status" value="1"/>
</dbReference>
<dbReference type="PANTHER" id="PTHR11815:SF10">
    <property type="entry name" value="SUCCINATE--COA LIGASE [GDP-FORMING] SUBUNIT BETA, MITOCHONDRIAL"/>
    <property type="match status" value="1"/>
</dbReference>
<dbReference type="PANTHER" id="PTHR11815">
    <property type="entry name" value="SUCCINYL-COA SYNTHETASE BETA CHAIN"/>
    <property type="match status" value="1"/>
</dbReference>
<dbReference type="Pfam" id="PF08442">
    <property type="entry name" value="ATP-grasp_2"/>
    <property type="match status" value="1"/>
</dbReference>
<dbReference type="Pfam" id="PF00549">
    <property type="entry name" value="Ligase_CoA"/>
    <property type="match status" value="1"/>
</dbReference>
<dbReference type="PIRSF" id="PIRSF001554">
    <property type="entry name" value="SucCS_beta"/>
    <property type="match status" value="1"/>
</dbReference>
<dbReference type="SUPFAM" id="SSF56059">
    <property type="entry name" value="Glutathione synthetase ATP-binding domain-like"/>
    <property type="match status" value="1"/>
</dbReference>
<dbReference type="SUPFAM" id="SSF52210">
    <property type="entry name" value="Succinyl-CoA synthetase domains"/>
    <property type="match status" value="1"/>
</dbReference>
<dbReference type="PROSITE" id="PS50975">
    <property type="entry name" value="ATP_GRASP"/>
    <property type="match status" value="1"/>
</dbReference>
<dbReference type="PROSITE" id="PS01217">
    <property type="entry name" value="SUCCINYL_COA_LIG_3"/>
    <property type="match status" value="1"/>
</dbReference>
<reference key="1">
    <citation type="journal article" date="2009" name="J. Bacteriol.">
        <title>Complete and draft genome sequences of six members of the Aquificales.</title>
        <authorList>
            <person name="Reysenbach A.-L."/>
            <person name="Hamamura N."/>
            <person name="Podar M."/>
            <person name="Griffiths E."/>
            <person name="Ferreira S."/>
            <person name="Hochstein R."/>
            <person name="Heidelberg J."/>
            <person name="Johnson J."/>
            <person name="Mead D."/>
            <person name="Pohorille A."/>
            <person name="Sarmiento M."/>
            <person name="Schweighofer K."/>
            <person name="Seshadri R."/>
            <person name="Voytek M.A."/>
        </authorList>
    </citation>
    <scope>NUCLEOTIDE SEQUENCE [LARGE SCALE GENOMIC DNA]</scope>
    <source>
        <strain>Y04AAS1</strain>
    </source>
</reference>
<gene>
    <name evidence="1" type="primary">sucC</name>
    <name type="ordered locus">HY04AAS1_0925</name>
</gene>
<sequence>MKLHEHQSKELLKKYGLPVPEGYAAFNVKEAKEAAQALGGYPLVVKAQIHCGARGKAGGVKIVKSDEELEAFSEAILGKILKTVQCPNGKVVSRLLIEKATPIEKEFYLSITLDRSNSKILIMASKEGGMEIEELSKEKPDAIIKEYVDPVLGIMPYQTRKLSFALGLNPSLFGKIVSKLYQAYMDLDASLLEINPLVLTKDGDIVLLDAKVEIDDNAAFRHKDIEELEDITQIDPLEVEAKKYGLNYIKLEGNIGCMVNGAGLAMTTMDIIKLAGGAPANFLDVGGGASVEQIANAFRILTSDENVKAVFINIFGGILRCDRLANGLIEAAKIVNIKIPVVVRLEGTNVEEGRKLLKESGLNFESAVDMWDGAQKAIKLAQ</sequence>